<gene>
    <name evidence="1" type="primary">smc</name>
    <name type="ordered locus">Ta0787</name>
</gene>
<keyword id="KW-0067">ATP-binding</keyword>
<keyword id="KW-0175">Coiled coil</keyword>
<keyword id="KW-0963">Cytoplasm</keyword>
<keyword id="KW-0238">DNA-binding</keyword>
<keyword id="KW-0547">Nucleotide-binding</keyword>
<keyword id="KW-1185">Reference proteome</keyword>
<feature type="chain" id="PRO_0000409288" description="Chromosome partition protein Smc">
    <location>
        <begin position="1"/>
        <end position="1140"/>
    </location>
</feature>
<feature type="domain" description="SMC hinge">
    <location>
        <begin position="502"/>
        <end position="619"/>
    </location>
</feature>
<feature type="coiled-coil region" evidence="1">
    <location>
        <begin position="160"/>
        <end position="484"/>
    </location>
</feature>
<feature type="coiled-coil region" evidence="1">
    <location>
        <begin position="660"/>
        <end position="990"/>
    </location>
</feature>
<feature type="binding site" evidence="1">
    <location>
        <begin position="34"/>
        <end position="41"/>
    </location>
    <ligand>
        <name>ATP</name>
        <dbReference type="ChEBI" id="CHEBI:30616"/>
    </ligand>
</feature>
<reference key="1">
    <citation type="journal article" date="2000" name="Nature">
        <title>The genome sequence of the thermoacidophilic scavenger Thermoplasma acidophilum.</title>
        <authorList>
            <person name="Ruepp A."/>
            <person name="Graml W."/>
            <person name="Santos-Martinez M.-L."/>
            <person name="Koretke K.K."/>
            <person name="Volker C."/>
            <person name="Mewes H.-W."/>
            <person name="Frishman D."/>
            <person name="Stocker S."/>
            <person name="Lupas A.N."/>
            <person name="Baumeister W."/>
        </authorList>
    </citation>
    <scope>NUCLEOTIDE SEQUENCE [LARGE SCALE GENOMIC DNA]</scope>
    <source>
        <strain>ATCC 25905 / DSM 1728 / JCM 9062 / NBRC 15155 / AMRC-C165</strain>
    </source>
</reference>
<evidence type="ECO:0000255" key="1">
    <source>
        <dbReference type="HAMAP-Rule" id="MF_01894"/>
    </source>
</evidence>
<dbReference type="EMBL" id="AL445065">
    <property type="protein sequence ID" value="CAC11918.1"/>
    <property type="molecule type" value="Genomic_DNA"/>
</dbReference>
<dbReference type="RefSeq" id="WP_010901200.1">
    <property type="nucleotide sequence ID" value="NC_002578.1"/>
</dbReference>
<dbReference type="SMR" id="Q9HK21"/>
<dbReference type="STRING" id="273075.gene:9572002"/>
<dbReference type="PaxDb" id="273075-Ta0787"/>
<dbReference type="EnsemblBacteria" id="CAC11918">
    <property type="protein sequence ID" value="CAC11918"/>
    <property type="gene ID" value="CAC11918"/>
</dbReference>
<dbReference type="KEGG" id="tac:Ta0787"/>
<dbReference type="eggNOG" id="arCOG00371">
    <property type="taxonomic scope" value="Archaea"/>
</dbReference>
<dbReference type="HOGENOM" id="CLU_001042_2_2_2"/>
<dbReference type="InParanoid" id="Q9HK21"/>
<dbReference type="OrthoDB" id="9143at2157"/>
<dbReference type="Proteomes" id="UP000001024">
    <property type="component" value="Chromosome"/>
</dbReference>
<dbReference type="GO" id="GO:0005694">
    <property type="term" value="C:chromosome"/>
    <property type="evidence" value="ECO:0007669"/>
    <property type="project" value="InterPro"/>
</dbReference>
<dbReference type="GO" id="GO:0005737">
    <property type="term" value="C:cytoplasm"/>
    <property type="evidence" value="ECO:0007669"/>
    <property type="project" value="UniProtKB-SubCell"/>
</dbReference>
<dbReference type="GO" id="GO:0005524">
    <property type="term" value="F:ATP binding"/>
    <property type="evidence" value="ECO:0007669"/>
    <property type="project" value="UniProtKB-UniRule"/>
</dbReference>
<dbReference type="GO" id="GO:0016887">
    <property type="term" value="F:ATP hydrolysis activity"/>
    <property type="evidence" value="ECO:0007669"/>
    <property type="project" value="InterPro"/>
</dbReference>
<dbReference type="GO" id="GO:0003677">
    <property type="term" value="F:DNA binding"/>
    <property type="evidence" value="ECO:0007669"/>
    <property type="project" value="UniProtKB-UniRule"/>
</dbReference>
<dbReference type="GO" id="GO:0030261">
    <property type="term" value="P:chromosome condensation"/>
    <property type="evidence" value="ECO:0007669"/>
    <property type="project" value="InterPro"/>
</dbReference>
<dbReference type="GO" id="GO:0007059">
    <property type="term" value="P:chromosome segregation"/>
    <property type="evidence" value="ECO:0007669"/>
    <property type="project" value="UniProtKB-UniRule"/>
</dbReference>
<dbReference type="GO" id="GO:0006260">
    <property type="term" value="P:DNA replication"/>
    <property type="evidence" value="ECO:0007669"/>
    <property type="project" value="UniProtKB-UniRule"/>
</dbReference>
<dbReference type="GO" id="GO:0007062">
    <property type="term" value="P:sister chromatid cohesion"/>
    <property type="evidence" value="ECO:0007669"/>
    <property type="project" value="InterPro"/>
</dbReference>
<dbReference type="Gene3D" id="1.10.287.1490">
    <property type="match status" value="2"/>
</dbReference>
<dbReference type="Gene3D" id="1.20.1060.20">
    <property type="match status" value="1"/>
</dbReference>
<dbReference type="Gene3D" id="3.30.70.1620">
    <property type="match status" value="1"/>
</dbReference>
<dbReference type="Gene3D" id="3.40.50.300">
    <property type="entry name" value="P-loop containing nucleotide triphosphate hydrolases"/>
    <property type="match status" value="2"/>
</dbReference>
<dbReference type="HAMAP" id="MF_01894">
    <property type="entry name" value="Smc_prok"/>
    <property type="match status" value="1"/>
</dbReference>
<dbReference type="InterPro" id="IPR027417">
    <property type="entry name" value="P-loop_NTPase"/>
</dbReference>
<dbReference type="InterPro" id="IPR003395">
    <property type="entry name" value="RecF/RecN/SMC_N"/>
</dbReference>
<dbReference type="InterPro" id="IPR024704">
    <property type="entry name" value="SMC"/>
</dbReference>
<dbReference type="InterPro" id="IPR010935">
    <property type="entry name" value="SMC_hinge"/>
</dbReference>
<dbReference type="InterPro" id="IPR036277">
    <property type="entry name" value="SMC_hinge_sf"/>
</dbReference>
<dbReference type="InterPro" id="IPR011890">
    <property type="entry name" value="SMC_prok"/>
</dbReference>
<dbReference type="NCBIfam" id="TIGR02169">
    <property type="entry name" value="SMC_prok_A"/>
    <property type="match status" value="1"/>
</dbReference>
<dbReference type="PANTHER" id="PTHR43977">
    <property type="entry name" value="STRUCTURAL MAINTENANCE OF CHROMOSOMES PROTEIN 3"/>
    <property type="match status" value="1"/>
</dbReference>
<dbReference type="Pfam" id="PF06470">
    <property type="entry name" value="SMC_hinge"/>
    <property type="match status" value="1"/>
</dbReference>
<dbReference type="Pfam" id="PF02463">
    <property type="entry name" value="SMC_N"/>
    <property type="match status" value="1"/>
</dbReference>
<dbReference type="PIRSF" id="PIRSF005719">
    <property type="entry name" value="SMC"/>
    <property type="match status" value="1"/>
</dbReference>
<dbReference type="SMART" id="SM00968">
    <property type="entry name" value="SMC_hinge"/>
    <property type="match status" value="1"/>
</dbReference>
<dbReference type="SUPFAM" id="SSF52540">
    <property type="entry name" value="P-loop containing nucleoside triphosphate hydrolases"/>
    <property type="match status" value="2"/>
</dbReference>
<dbReference type="SUPFAM" id="SSF75553">
    <property type="entry name" value="Smc hinge domain"/>
    <property type="match status" value="1"/>
</dbReference>
<dbReference type="SUPFAM" id="SSF57997">
    <property type="entry name" value="Tropomyosin"/>
    <property type="match status" value="1"/>
</dbReference>
<comment type="function">
    <text evidence="1">Required for chromosome condensation and partitioning.</text>
</comment>
<comment type="subunit">
    <text evidence="1">Homodimer.</text>
</comment>
<comment type="subcellular location">
    <subcellularLocation>
        <location evidence="1">Cytoplasm</location>
    </subcellularLocation>
</comment>
<comment type="domain">
    <text evidence="1">Contains large globular domains required for ATP hydrolysis at each terminus and a third globular domain forming a flexible SMC hinge near the middle of the molecule. These domains are separated by coiled-coil structures.</text>
</comment>
<comment type="similarity">
    <text evidence="1">Belongs to the SMC family.</text>
</comment>
<proteinExistence type="inferred from homology"/>
<sequence>MSSYIERIEAHNFKSFRRKKVINFTKGLNVISGPNGSGKSNIGDMLLFVLGTKSIHAVRADRLSDLVSKGSGNECSVSVTFRSDDGRSLVIERRLVIEDEPKSYYYVNGVRSRLSEIDETLASMGINFGTYSFVLQGDINDFISYSGQERRKLIERISGVDQFDSEIERVKADIEAVSRNMEINQTIIDEKRQNLERLRTEKEKKERYDALLKRKRDVEYTEILNRKNAMERQKRTIEGQISDLTKEIAQLEERRSDLEKRSEAIRIRREDVAKRIDDLTSGEMNRVKTDLHSVEVDIAKIRGIIDEKNRNMEKLEETIAKYESERDSTDREIEDLDRQIEEKAKRKRALEDRYADLKKRYDDLFSRAQAEAVDAAETRRKSKEYQEKIDGLGREIEELKAAGSQMNADLAVLLQKKAALEERKEDLDLKIRTSEWKAKETSEDMGKYSRKYYDLKAKYDQINDRISDLKSEISEKEASAKIASSRVPEYVRNVKMLEESVEGVIGLVRDLISYGEKYVKAVESAGGGRLNAVVVKDDAVAKECIQILKDRKISPMTFLPLNKMRDPPAQRDVGKISKDPGYLGILMDFVDFEDQYRSAVYYAIRDTILVQDIDAGRRLMGIFRLVTLDGDIFDPGGSITGGYRNYASDYASALRMQHDLEGMKIQLSSLMDDRSRIKREMDQAFSEMSEASRRTGEIMKEQEMLKKEAERSREELKQVMDDISSTDRAIADKKRMIDENEKVIEQKTLDLHKYQEALNDLYDRIDPEFFKNIGDLSNEINEVRSEIDAVASELNQITSRRDILSSERKHLEDQMIDTKLQENSIAAEIDDLNGKKRELEEKAKKYQYALNDLEGRYGNLSAQVREADKQIREMENGINDAKASIDLKNDLMNDLKVKAGILEGNLSSIERELSSYSGCEAVIGDLQAMRQEIERAIMDLGEINNAAPQQYEDALKDLDDYEKKHEKLMEEKKALEETTAMLNEKKREVFVKTFTDISEKMNYVYGIINGGTAKLIMIGSDPLTSSVEVSVTPKDKATVKIQALSGGEKSVAALSFITAVQILMPSSIYFLDEVDMYLDAYNAENMIKMISQNAGEAQTIVISLKSLVFSYASNAIGVTSVNGESFVFNGHFDGSPEAAP</sequence>
<protein>
    <recommendedName>
        <fullName evidence="1">Chromosome partition protein Smc</fullName>
    </recommendedName>
</protein>
<name>SMC_THEAC</name>
<accession>Q9HK21</accession>
<organism>
    <name type="scientific">Thermoplasma acidophilum (strain ATCC 25905 / DSM 1728 / JCM 9062 / NBRC 15155 / AMRC-C165)</name>
    <dbReference type="NCBI Taxonomy" id="273075"/>
    <lineage>
        <taxon>Archaea</taxon>
        <taxon>Methanobacteriati</taxon>
        <taxon>Thermoplasmatota</taxon>
        <taxon>Thermoplasmata</taxon>
        <taxon>Thermoplasmatales</taxon>
        <taxon>Thermoplasmataceae</taxon>
        <taxon>Thermoplasma</taxon>
    </lineage>
</organism>